<comment type="subunit">
    <text evidence="1">Forms oligomers.</text>
</comment>
<comment type="subcellular location">
    <subcellularLocation>
        <location evidence="1">Cytoplasm</location>
        <location evidence="1">Nucleoid</location>
    </subcellularLocation>
</comment>
<comment type="similarity">
    <text evidence="1">Belongs to the MraZ family.</text>
</comment>
<sequence length="143" mass="16345">MFMGEYQHNLDAKGRLIIPAKLREQIGPAMVLTRGMEGCIFGYPLTEWAKIEAKLAKLPLTKKNARSFTRMFYSGAMEGEFDKQGRINLSPTLKKHAGLVKECVIVGVSNRIEIWAKERWEEYSDEANESYDEIAEDLDDIEL</sequence>
<dbReference type="EMBL" id="CR954253">
    <property type="protein sequence ID" value="CAI97562.1"/>
    <property type="molecule type" value="Genomic_DNA"/>
</dbReference>
<dbReference type="RefSeq" id="WP_003619156.1">
    <property type="nucleotide sequence ID" value="NZ_JQAV01000001.1"/>
</dbReference>
<dbReference type="SMR" id="Q1GAU1"/>
<dbReference type="STRING" id="390333.Ldb0735"/>
<dbReference type="KEGG" id="ldb:Ldb0735"/>
<dbReference type="PATRIC" id="fig|390333.13.peg.64"/>
<dbReference type="eggNOG" id="COG2001">
    <property type="taxonomic scope" value="Bacteria"/>
</dbReference>
<dbReference type="HOGENOM" id="CLU_107907_0_5_9"/>
<dbReference type="BioCyc" id="LDEL390333:LDB_RS03220-MONOMER"/>
<dbReference type="Proteomes" id="UP000001259">
    <property type="component" value="Chromosome"/>
</dbReference>
<dbReference type="GO" id="GO:0005737">
    <property type="term" value="C:cytoplasm"/>
    <property type="evidence" value="ECO:0007669"/>
    <property type="project" value="UniProtKB-UniRule"/>
</dbReference>
<dbReference type="GO" id="GO:0009295">
    <property type="term" value="C:nucleoid"/>
    <property type="evidence" value="ECO:0007669"/>
    <property type="project" value="UniProtKB-SubCell"/>
</dbReference>
<dbReference type="GO" id="GO:0003700">
    <property type="term" value="F:DNA-binding transcription factor activity"/>
    <property type="evidence" value="ECO:0007669"/>
    <property type="project" value="UniProtKB-UniRule"/>
</dbReference>
<dbReference type="GO" id="GO:0000976">
    <property type="term" value="F:transcription cis-regulatory region binding"/>
    <property type="evidence" value="ECO:0007669"/>
    <property type="project" value="TreeGrafter"/>
</dbReference>
<dbReference type="GO" id="GO:2000143">
    <property type="term" value="P:negative regulation of DNA-templated transcription initiation"/>
    <property type="evidence" value="ECO:0007669"/>
    <property type="project" value="TreeGrafter"/>
</dbReference>
<dbReference type="CDD" id="cd16321">
    <property type="entry name" value="MraZ_C"/>
    <property type="match status" value="1"/>
</dbReference>
<dbReference type="CDD" id="cd16320">
    <property type="entry name" value="MraZ_N"/>
    <property type="match status" value="1"/>
</dbReference>
<dbReference type="FunFam" id="3.40.1550.20:FF:000002">
    <property type="entry name" value="Transcriptional regulator MraZ"/>
    <property type="match status" value="1"/>
</dbReference>
<dbReference type="Gene3D" id="3.40.1550.20">
    <property type="entry name" value="Transcriptional regulator MraZ domain"/>
    <property type="match status" value="1"/>
</dbReference>
<dbReference type="HAMAP" id="MF_01008">
    <property type="entry name" value="MraZ"/>
    <property type="match status" value="1"/>
</dbReference>
<dbReference type="InterPro" id="IPR003444">
    <property type="entry name" value="MraZ"/>
</dbReference>
<dbReference type="InterPro" id="IPR035644">
    <property type="entry name" value="MraZ_C"/>
</dbReference>
<dbReference type="InterPro" id="IPR020603">
    <property type="entry name" value="MraZ_dom"/>
</dbReference>
<dbReference type="InterPro" id="IPR035642">
    <property type="entry name" value="MraZ_N"/>
</dbReference>
<dbReference type="InterPro" id="IPR038619">
    <property type="entry name" value="MraZ_sf"/>
</dbReference>
<dbReference type="InterPro" id="IPR007159">
    <property type="entry name" value="SpoVT-AbrB_dom"/>
</dbReference>
<dbReference type="InterPro" id="IPR037914">
    <property type="entry name" value="SpoVT-AbrB_sf"/>
</dbReference>
<dbReference type="NCBIfam" id="TIGR00242">
    <property type="entry name" value="division/cell wall cluster transcriptional repressor MraZ"/>
    <property type="match status" value="1"/>
</dbReference>
<dbReference type="PANTHER" id="PTHR34701">
    <property type="entry name" value="TRANSCRIPTIONAL REGULATOR MRAZ"/>
    <property type="match status" value="1"/>
</dbReference>
<dbReference type="PANTHER" id="PTHR34701:SF1">
    <property type="entry name" value="TRANSCRIPTIONAL REGULATOR MRAZ"/>
    <property type="match status" value="1"/>
</dbReference>
<dbReference type="Pfam" id="PF02381">
    <property type="entry name" value="MraZ"/>
    <property type="match status" value="2"/>
</dbReference>
<dbReference type="SUPFAM" id="SSF89447">
    <property type="entry name" value="AbrB/MazE/MraZ-like"/>
    <property type="match status" value="1"/>
</dbReference>
<dbReference type="PROSITE" id="PS51740">
    <property type="entry name" value="SPOVT_ABRB"/>
    <property type="match status" value="2"/>
</dbReference>
<organism>
    <name type="scientific">Lactobacillus delbrueckii subsp. bulgaricus (strain ATCC 11842 / DSM 20081 / BCRC 10696 / JCM 1002 / NBRC 13953 / NCIMB 11778 / NCTC 12712 / WDCM 00102 / Lb 14)</name>
    <dbReference type="NCBI Taxonomy" id="390333"/>
    <lineage>
        <taxon>Bacteria</taxon>
        <taxon>Bacillati</taxon>
        <taxon>Bacillota</taxon>
        <taxon>Bacilli</taxon>
        <taxon>Lactobacillales</taxon>
        <taxon>Lactobacillaceae</taxon>
        <taxon>Lactobacillus</taxon>
    </lineage>
</organism>
<feature type="chain" id="PRO_1000062887" description="Transcriptional regulator MraZ">
    <location>
        <begin position="1"/>
        <end position="143"/>
    </location>
</feature>
<feature type="domain" description="SpoVT-AbrB 1" evidence="2">
    <location>
        <begin position="5"/>
        <end position="47"/>
    </location>
</feature>
<feature type="domain" description="SpoVT-AbrB 2" evidence="2">
    <location>
        <begin position="76"/>
        <end position="119"/>
    </location>
</feature>
<reference key="1">
    <citation type="journal article" date="2006" name="Proc. Natl. Acad. Sci. U.S.A.">
        <title>The complete genome sequence of Lactobacillus bulgaricus reveals extensive and ongoing reductive evolution.</title>
        <authorList>
            <person name="van de Guchte M."/>
            <person name="Penaud S."/>
            <person name="Grimaldi C."/>
            <person name="Barbe V."/>
            <person name="Bryson K."/>
            <person name="Nicolas P."/>
            <person name="Robert C."/>
            <person name="Oztas S."/>
            <person name="Mangenot S."/>
            <person name="Couloux A."/>
            <person name="Loux V."/>
            <person name="Dervyn R."/>
            <person name="Bossy R."/>
            <person name="Bolotin A."/>
            <person name="Batto J.-M."/>
            <person name="Walunas T."/>
            <person name="Gibrat J.-F."/>
            <person name="Bessieres P."/>
            <person name="Weissenbach J."/>
            <person name="Ehrlich S.D."/>
            <person name="Maguin E."/>
        </authorList>
    </citation>
    <scope>NUCLEOTIDE SEQUENCE [LARGE SCALE GENOMIC DNA]</scope>
    <source>
        <strain>ATCC 11842 / DSM 20081 / BCRC 10696 / JCM 1002 / NBRC 13953 / NCIMB 11778 / NCTC 12712 / WDCM 00102 / Lb 14</strain>
    </source>
</reference>
<keyword id="KW-0963">Cytoplasm</keyword>
<keyword id="KW-0238">DNA-binding</keyword>
<keyword id="KW-1185">Reference proteome</keyword>
<keyword id="KW-0677">Repeat</keyword>
<keyword id="KW-0804">Transcription</keyword>
<keyword id="KW-0805">Transcription regulation</keyword>
<protein>
    <recommendedName>
        <fullName>Transcriptional regulator MraZ</fullName>
    </recommendedName>
</protein>
<accession>Q1GAU1</accession>
<evidence type="ECO:0000255" key="1">
    <source>
        <dbReference type="HAMAP-Rule" id="MF_01008"/>
    </source>
</evidence>
<evidence type="ECO:0000255" key="2">
    <source>
        <dbReference type="PROSITE-ProRule" id="PRU01076"/>
    </source>
</evidence>
<proteinExistence type="inferred from homology"/>
<gene>
    <name evidence="1" type="primary">mraZ</name>
    <name type="ordered locus">Ldb0735</name>
</gene>
<name>MRAZ_LACDA</name>